<dbReference type="EMBL" id="AB031388">
    <property type="protein sequence ID" value="BAB11963.1"/>
    <property type="molecule type" value="mRNA"/>
</dbReference>
<dbReference type="EMBL" id="AL671968">
    <property type="status" value="NOT_ANNOTATED_CDS"/>
    <property type="molecule type" value="Genomic_DNA"/>
</dbReference>
<dbReference type="EMBL" id="CH466574">
    <property type="protein sequence ID" value="EDL40398.1"/>
    <property type="molecule type" value="Genomic_DNA"/>
</dbReference>
<dbReference type="EMBL" id="BC033410">
    <property type="protein sequence ID" value="AAH33410.1"/>
    <property type="molecule type" value="mRNA"/>
</dbReference>
<dbReference type="EMBL" id="AK012082">
    <property type="protein sequence ID" value="BAB28016.1"/>
    <property type="molecule type" value="mRNA"/>
</dbReference>
<dbReference type="CCDS" id="CCDS24354.1">
    <molecule id="Q9EST3-1"/>
</dbReference>
<dbReference type="CCDS" id="CCDS48739.1">
    <molecule id="Q9EST3-2"/>
</dbReference>
<dbReference type="RefSeq" id="NP_001160019.1">
    <molecule id="Q9EST3-1"/>
    <property type="nucleotide sequence ID" value="NM_001166547.1"/>
</dbReference>
<dbReference type="RefSeq" id="NP_001160020.1">
    <molecule id="Q9EST3-2"/>
    <property type="nucleotide sequence ID" value="NM_001166548.1"/>
</dbReference>
<dbReference type="RefSeq" id="NP_001160021.1">
    <molecule id="Q9EST3-2"/>
    <property type="nucleotide sequence ID" value="NM_001166549.1"/>
</dbReference>
<dbReference type="RefSeq" id="NP_076232.2">
    <molecule id="Q9EST3-1"/>
    <property type="nucleotide sequence ID" value="NM_023743.2"/>
</dbReference>
<dbReference type="RefSeq" id="XP_006514904.1">
    <molecule id="Q9EST3-1"/>
    <property type="nucleotide sequence ID" value="XM_006514841.4"/>
</dbReference>
<dbReference type="RefSeq" id="XP_006514905.1">
    <molecule id="Q9EST3-1"/>
    <property type="nucleotide sequence ID" value="XM_006514842.5"/>
</dbReference>
<dbReference type="RefSeq" id="XP_006514906.1">
    <molecule id="Q9EST3-1"/>
    <property type="nucleotide sequence ID" value="XM_006514843.5"/>
</dbReference>
<dbReference type="RefSeq" id="XP_006514907.1">
    <molecule id="Q9EST3-2"/>
    <property type="nucleotide sequence ID" value="XM_006514844.4"/>
</dbReference>
<dbReference type="RefSeq" id="XP_017170295.1">
    <molecule id="Q9EST3-2"/>
    <property type="nucleotide sequence ID" value="XM_017314806.3"/>
</dbReference>
<dbReference type="SMR" id="Q9EST3"/>
<dbReference type="BioGRID" id="216574">
    <property type="interactions" value="10"/>
</dbReference>
<dbReference type="FunCoup" id="Q9EST3">
    <property type="interactions" value="4976"/>
</dbReference>
<dbReference type="STRING" id="10090.ENSMUSP00000136768"/>
<dbReference type="GlyGen" id="Q9EST3">
    <property type="glycosylation" value="9 sites, 2 N-linked glycans (2 sites), 1 O-linked glycan (6 sites)"/>
</dbReference>
<dbReference type="iPTMnet" id="Q9EST3"/>
<dbReference type="PhosphoSitePlus" id="Q9EST3"/>
<dbReference type="jPOST" id="Q9EST3"/>
<dbReference type="PaxDb" id="10090-ENSMUSP00000105676"/>
<dbReference type="PeptideAtlas" id="Q9EST3"/>
<dbReference type="ProteomicsDB" id="296447">
    <molecule id="Q9EST3-1"/>
</dbReference>
<dbReference type="ProteomicsDB" id="296448">
    <molecule id="Q9EST3-2"/>
</dbReference>
<dbReference type="Pumba" id="Q9EST3"/>
<dbReference type="Antibodypedia" id="279">
    <property type="antibodies" value="303 antibodies from 29 providers"/>
</dbReference>
<dbReference type="DNASU" id="74203"/>
<dbReference type="Ensembl" id="ENSMUST00000020734.11">
    <molecule id="Q9EST3-2"/>
    <property type="protein sequence ID" value="ENSMUSP00000020734.5"/>
    <property type="gene ID" value="ENSMUSG00000020454.18"/>
</dbReference>
<dbReference type="Ensembl" id="ENSMUST00000110048.8">
    <molecule id="Q9EST3-2"/>
    <property type="protein sequence ID" value="ENSMUSP00000105675.2"/>
    <property type="gene ID" value="ENSMUSG00000020454.18"/>
</dbReference>
<dbReference type="Ensembl" id="ENSMUST00000110049.8">
    <molecule id="Q9EST3-1"/>
    <property type="protein sequence ID" value="ENSMUSP00000105676.2"/>
    <property type="gene ID" value="ENSMUSG00000020454.18"/>
</dbReference>
<dbReference type="Ensembl" id="ENSMUST00000179770.8">
    <molecule id="Q9EST3-1"/>
    <property type="protein sequence ID" value="ENSMUSP00000136768.2"/>
    <property type="gene ID" value="ENSMUSG00000020454.18"/>
</dbReference>
<dbReference type="GeneID" id="74203"/>
<dbReference type="KEGG" id="mmu:74203"/>
<dbReference type="UCSC" id="uc007hsc.2">
    <molecule id="Q9EST3-2"/>
    <property type="organism name" value="mouse"/>
</dbReference>
<dbReference type="UCSC" id="uc007hse.2">
    <molecule id="Q9EST3-1"/>
    <property type="organism name" value="mouse"/>
</dbReference>
<dbReference type="AGR" id="MGI:1921453"/>
<dbReference type="CTD" id="56478"/>
<dbReference type="MGI" id="MGI:1921453">
    <property type="gene designation" value="Eif4enif1"/>
</dbReference>
<dbReference type="VEuPathDB" id="HostDB:ENSMUSG00000020454"/>
<dbReference type="eggNOG" id="ENOG502QRQE">
    <property type="taxonomic scope" value="Eukaryota"/>
</dbReference>
<dbReference type="GeneTree" id="ENSGT00390000012071"/>
<dbReference type="HOGENOM" id="CLU_014394_0_0_1"/>
<dbReference type="InParanoid" id="Q9EST3"/>
<dbReference type="OMA" id="WITRGSW"/>
<dbReference type="OrthoDB" id="8916892at2759"/>
<dbReference type="PhylomeDB" id="Q9EST3"/>
<dbReference type="TreeFam" id="TF101531"/>
<dbReference type="BioGRID-ORCS" id="74203">
    <property type="hits" value="12 hits in 76 CRISPR screens"/>
</dbReference>
<dbReference type="CD-CODE" id="089DA44D">
    <property type="entry name" value="MARDO"/>
</dbReference>
<dbReference type="ChiTaRS" id="Eif4enif1">
    <property type="organism name" value="mouse"/>
</dbReference>
<dbReference type="PRO" id="PR:Q9EST3"/>
<dbReference type="Proteomes" id="UP000000589">
    <property type="component" value="Chromosome 11"/>
</dbReference>
<dbReference type="RNAct" id="Q9EST3">
    <property type="molecule type" value="protein"/>
</dbReference>
<dbReference type="Bgee" id="ENSMUSG00000020454">
    <property type="expression patterns" value="Expressed in animal zygote and 266 other cell types or tissues"/>
</dbReference>
<dbReference type="ExpressionAtlas" id="Q9EST3">
    <property type="expression patterns" value="baseline and differential"/>
</dbReference>
<dbReference type="GO" id="GO:0005737">
    <property type="term" value="C:cytoplasm"/>
    <property type="evidence" value="ECO:0000314"/>
    <property type="project" value="MGI"/>
</dbReference>
<dbReference type="GO" id="GO:0005829">
    <property type="term" value="C:cytosol"/>
    <property type="evidence" value="ECO:0000314"/>
    <property type="project" value="MGI"/>
</dbReference>
<dbReference type="GO" id="GO:0016607">
    <property type="term" value="C:nuclear speck"/>
    <property type="evidence" value="ECO:0007669"/>
    <property type="project" value="UniProtKB-SubCell"/>
</dbReference>
<dbReference type="GO" id="GO:0005634">
    <property type="term" value="C:nucleus"/>
    <property type="evidence" value="ECO:0000314"/>
    <property type="project" value="MGI"/>
</dbReference>
<dbReference type="GO" id="GO:0000932">
    <property type="term" value="C:P-body"/>
    <property type="evidence" value="ECO:0000314"/>
    <property type="project" value="MGI"/>
</dbReference>
<dbReference type="GO" id="GO:0016605">
    <property type="term" value="C:PML body"/>
    <property type="evidence" value="ECO:0007669"/>
    <property type="project" value="UniProtKB-SubCell"/>
</dbReference>
<dbReference type="GO" id="GO:0019900">
    <property type="term" value="F:kinase binding"/>
    <property type="evidence" value="ECO:0007669"/>
    <property type="project" value="Ensembl"/>
</dbReference>
<dbReference type="GO" id="GO:0003729">
    <property type="term" value="F:mRNA binding"/>
    <property type="evidence" value="ECO:0000314"/>
    <property type="project" value="MGI"/>
</dbReference>
<dbReference type="GO" id="GO:0005049">
    <property type="term" value="F:nuclear export signal receptor activity"/>
    <property type="evidence" value="ECO:0007669"/>
    <property type="project" value="Ensembl"/>
</dbReference>
<dbReference type="GO" id="GO:0035278">
    <property type="term" value="P:miRNA-mediated gene silencing by inhibition of translation"/>
    <property type="evidence" value="ECO:0000250"/>
    <property type="project" value="UniProtKB"/>
</dbReference>
<dbReference type="GO" id="GO:0048255">
    <property type="term" value="P:mRNA stabilization"/>
    <property type="evidence" value="ECO:0000250"/>
    <property type="project" value="UniProtKB"/>
</dbReference>
<dbReference type="GO" id="GO:0106289">
    <property type="term" value="P:negative regulation of deadenylation-dependent decapping of nuclear-transcribed mRNA"/>
    <property type="evidence" value="ECO:0000250"/>
    <property type="project" value="UniProtKB"/>
</dbReference>
<dbReference type="GO" id="GO:0045665">
    <property type="term" value="P:negative regulation of neuron differentiation"/>
    <property type="evidence" value="ECO:0000316"/>
    <property type="project" value="MGI"/>
</dbReference>
<dbReference type="GO" id="GO:0017148">
    <property type="term" value="P:negative regulation of translation"/>
    <property type="evidence" value="ECO:0000315"/>
    <property type="project" value="MGI"/>
</dbReference>
<dbReference type="GO" id="GO:0030182">
    <property type="term" value="P:neuron differentiation"/>
    <property type="evidence" value="ECO:0000316"/>
    <property type="project" value="MGI"/>
</dbReference>
<dbReference type="GO" id="GO:0033962">
    <property type="term" value="P:P-body assembly"/>
    <property type="evidence" value="ECO:0000250"/>
    <property type="project" value="UniProtKB"/>
</dbReference>
<dbReference type="GO" id="GO:0060213">
    <property type="term" value="P:positive regulation of nuclear-transcribed mRNA poly(A) tail shortening"/>
    <property type="evidence" value="ECO:0000250"/>
    <property type="project" value="UniProtKB"/>
</dbReference>
<dbReference type="GO" id="GO:0006606">
    <property type="term" value="P:protein import into nucleus"/>
    <property type="evidence" value="ECO:0000250"/>
    <property type="project" value="UniProtKB"/>
</dbReference>
<dbReference type="GO" id="GO:0019827">
    <property type="term" value="P:stem cell population maintenance"/>
    <property type="evidence" value="ECO:0000316"/>
    <property type="project" value="MGI"/>
</dbReference>
<dbReference type="GO" id="GO:0006412">
    <property type="term" value="P:translation"/>
    <property type="evidence" value="ECO:0000315"/>
    <property type="project" value="MGI"/>
</dbReference>
<dbReference type="InterPro" id="IPR018862">
    <property type="entry name" value="eIF4E-T"/>
</dbReference>
<dbReference type="PANTHER" id="PTHR12269">
    <property type="entry name" value="EUKARYOTIC TRANSLATION INITIATION FACTOR 4E TRANSPORTER"/>
    <property type="match status" value="1"/>
</dbReference>
<dbReference type="PANTHER" id="PTHR12269:SF1">
    <property type="entry name" value="EUKARYOTIC TRANSLATION INITIATION FACTOR 4E TRANSPORTER"/>
    <property type="match status" value="1"/>
</dbReference>
<dbReference type="Pfam" id="PF10477">
    <property type="entry name" value="EIF4E-T"/>
    <property type="match status" value="1"/>
</dbReference>
<accession>Q9EST3</accession>
<accession>Q8CFW0</accession>
<accession>Q9CSS3</accession>
<feature type="chain" id="PRO_0000064382" description="Eukaryotic translation initiation factor 4E transporter">
    <location>
        <begin position="1"/>
        <end position="983"/>
    </location>
</feature>
<feature type="region of interest" description="Disordered" evidence="2">
    <location>
        <begin position="1"/>
        <end position="22"/>
    </location>
</feature>
<feature type="region of interest" description="Disordered" evidence="2">
    <location>
        <begin position="40"/>
        <end position="99"/>
    </location>
</feature>
<feature type="region of interest" description="Interaction with CSDE1" evidence="1">
    <location>
        <begin position="130"/>
        <end position="160"/>
    </location>
</feature>
<feature type="region of interest" description="Disordered" evidence="2">
    <location>
        <begin position="206"/>
        <end position="229"/>
    </location>
</feature>
<feature type="region of interest" description="Interaction with DDX6" evidence="1">
    <location>
        <begin position="218"/>
        <end position="239"/>
    </location>
</feature>
<feature type="region of interest" description="Disordered" evidence="2">
    <location>
        <begin position="341"/>
        <end position="360"/>
    </location>
</feature>
<feature type="region of interest" description="Interaction with LSM14A" evidence="1">
    <location>
        <begin position="447"/>
        <end position="489"/>
    </location>
</feature>
<feature type="region of interest" description="Disordered" evidence="2">
    <location>
        <begin position="585"/>
        <end position="616"/>
    </location>
</feature>
<feature type="region of interest" description="Disordered" evidence="2">
    <location>
        <begin position="642"/>
        <end position="693"/>
    </location>
</feature>
<feature type="region of interest" description="Interaction with PATL1" evidence="1">
    <location>
        <begin position="694"/>
        <end position="712"/>
    </location>
</feature>
<feature type="region of interest" description="Disordered" evidence="2">
    <location>
        <begin position="708"/>
        <end position="800"/>
    </location>
</feature>
<feature type="region of interest" description="Disordered" evidence="2">
    <location>
        <begin position="906"/>
        <end position="951"/>
    </location>
</feature>
<feature type="region of interest" description="Interaction with LSM14A" evidence="1">
    <location>
        <begin position="938"/>
        <end position="983"/>
    </location>
</feature>
<feature type="short sequence motif" description="YXXXXLphi motif" evidence="3">
    <location>
        <begin position="29"/>
        <end position="35"/>
    </location>
</feature>
<feature type="short sequence motif" description="Nuclear localization signal" evidence="1">
    <location>
        <begin position="194"/>
        <end position="210"/>
    </location>
</feature>
<feature type="short sequence motif" description="Nuclear export signal" evidence="1">
    <location>
        <begin position="437"/>
        <end position="446"/>
    </location>
</feature>
<feature type="short sequence motif" description="Nuclear export signal" evidence="1">
    <location>
        <begin position="612"/>
        <end position="637"/>
    </location>
</feature>
<feature type="compositionally biased region" description="Basic and acidic residues" evidence="2">
    <location>
        <begin position="52"/>
        <end position="66"/>
    </location>
</feature>
<feature type="compositionally biased region" description="Basic and acidic residues" evidence="2">
    <location>
        <begin position="81"/>
        <end position="99"/>
    </location>
</feature>
<feature type="compositionally biased region" description="Low complexity" evidence="2">
    <location>
        <begin position="344"/>
        <end position="355"/>
    </location>
</feature>
<feature type="compositionally biased region" description="Basic and acidic residues" evidence="2">
    <location>
        <begin position="651"/>
        <end position="660"/>
    </location>
</feature>
<feature type="compositionally biased region" description="Basic and acidic residues" evidence="2">
    <location>
        <begin position="724"/>
        <end position="734"/>
    </location>
</feature>
<feature type="compositionally biased region" description="Polar residues" evidence="2">
    <location>
        <begin position="735"/>
        <end position="774"/>
    </location>
</feature>
<feature type="compositionally biased region" description="Polar residues" evidence="2">
    <location>
        <begin position="910"/>
        <end position="928"/>
    </location>
</feature>
<feature type="modified residue" description="Phosphoserine" evidence="1">
    <location>
        <position position="4"/>
    </location>
</feature>
<feature type="modified residue" description="Phosphoserine" evidence="1">
    <location>
        <position position="73"/>
    </location>
</feature>
<feature type="modified residue" description="Phosphoserine" evidence="1">
    <location>
        <position position="77"/>
    </location>
</feature>
<feature type="modified residue" description="Phosphoserine" evidence="1">
    <location>
        <position position="114"/>
    </location>
</feature>
<feature type="modified residue" description="Phosphoserine" evidence="1">
    <location>
        <position position="119"/>
    </location>
</feature>
<feature type="modified residue" description="Phosphoserine" evidence="1">
    <location>
        <position position="135"/>
    </location>
</feature>
<feature type="modified residue" description="Phosphoserine" evidence="1">
    <location>
        <position position="137"/>
    </location>
</feature>
<feature type="modified residue" description="Phosphoserine" evidence="1">
    <location>
        <position position="300"/>
    </location>
</feature>
<feature type="modified residue" description="Phosphoserine" evidence="1">
    <location>
        <position position="344"/>
    </location>
</feature>
<feature type="modified residue" description="Phosphoserine" evidence="1">
    <location>
        <position position="352"/>
    </location>
</feature>
<feature type="modified residue" description="Phosphoserine" evidence="1">
    <location>
        <position position="373"/>
    </location>
</feature>
<feature type="modified residue" description="Phosphoserine" evidence="1">
    <location>
        <position position="416"/>
    </location>
</feature>
<feature type="modified residue" description="N6-acetyllysine" evidence="1">
    <location>
        <position position="485"/>
    </location>
</feature>
<feature type="modified residue" description="Phosphoserine" evidence="12">
    <location>
        <position position="563"/>
    </location>
</feature>
<feature type="modified residue" description="Phosphoserine" evidence="1">
    <location>
        <position position="586"/>
    </location>
</feature>
<feature type="modified residue" description="Phosphoserine" evidence="1">
    <location>
        <position position="692"/>
    </location>
</feature>
<feature type="modified residue" description="Phosphoserine" evidence="1">
    <location>
        <position position="751"/>
    </location>
</feature>
<feature type="modified residue" description="Phosphoserine" evidence="1">
    <location>
        <position position="919"/>
    </location>
</feature>
<feature type="modified residue" description="Phosphoserine" evidence="11">
    <location>
        <position position="949"/>
    </location>
</feature>
<feature type="cross-link" description="Glycyl lysine isopeptide (Lys-Gly) (interchain with G-Cter in SUMO2)" evidence="1">
    <location>
        <position position="409"/>
    </location>
</feature>
<feature type="splice variant" id="VSP_003785" description="In isoform 2." evidence="5">
    <location>
        <begin position="504"/>
        <end position="527"/>
    </location>
</feature>
<feature type="mutagenesis site" description="Abolished interaction with EIF4E." evidence="3">
    <original>YTKEEL</original>
    <variation>ATKEEA</variation>
    <location>
        <begin position="29"/>
        <end position="34"/>
    </location>
</feature>
<feature type="sequence conflict" description="In Ref. 1; BAB11963." evidence="9" ref="1">
    <original>R</original>
    <variation>Q</variation>
    <location>
        <position position="345"/>
    </location>
</feature>
<feature type="sequence conflict" description="In Ref. 1; BAB11963." evidence="9" ref="1">
    <original>S</original>
    <variation>N</variation>
    <location>
        <position position="773"/>
    </location>
</feature>
<comment type="function">
    <text evidence="1 4">EIF4E-binding protein that regulates translation and stability of mRNAs in processing bodies (P-bodies) (PubMed:25456498). Plays a key role in P-bodies to coordinate the storage of translationally inactive mRNAs in the cytoplasm and prevent their degradation (By similarity). Acts as a binding platform for multiple RNA-binding proteins: promotes deadenylation of mRNAs via its interaction with the CCR4-NOT complex, and blocks decapping via interaction with eIF4E (EIF4E and EIF4E2), thereby protecting deadenylated and repressed mRNAs from degradation (By similarity). Component of a multiprotein complex that sequesters and represses translation of proneurogenic factors during neurogenesis (PubMed:25456498). Promotes miRNA-mediated translational repression (By similarity). Involved in mRNA translational repression mediated by the miRNA effector TNRC6B by protecting TNRC6B-targeted mRNAs from decapping and subsequent decay (By similarity). Required for the formation of P-bodies (By similarity). Also acts as a nucleoplasmic shuttling protein, which mediates the nuclear import of EIF4E and DDX6 by a piggy-back mechanism (By similarity).</text>
</comment>
<comment type="subunit">
    <text evidence="1 3">Interacts (via YXXXXLphi motif) with EIF4E (PubMed:16343815). Interacts (via YXXXXLphi motif) with EIF4E2 (By similarity). Interacts with DDX6. Interacts with CSDE1/UNR (By similarity). Interacts with CNOT1; promoting association with the CCR4-NOT complex (By similarity). Interacts with LSM14A; promoting EIF4ENIF1 localization to P-bodies (By similarity). Interacts with PATL1 (By similarity). Interacts with importin beta only in the presence of importin alpha, suggesting a direct interaction with importin alpha (By similarity). Interacts with APOBEC3G in an RNA-dependent manner (By similarity).</text>
</comment>
<comment type="subcellular location">
    <subcellularLocation>
        <location evidence="3">Cytoplasm</location>
    </subcellularLocation>
    <subcellularLocation>
        <location evidence="1">Nucleus</location>
    </subcellularLocation>
    <subcellularLocation>
        <location evidence="1">Nucleus</location>
        <location evidence="1">PML body</location>
    </subcellularLocation>
    <subcellularLocation>
        <location evidence="1">Nucleus speckle</location>
    </subcellularLocation>
    <text evidence="1">Predominantly cytoplasmic (By similarity). Mainly localizes to processing bodies (P-bodies) (By similarity). Shuttles between the nucleus and the cytoplasm in a CRM1-dependent manner. Localization to nuclear foci and speckles requires active transcription (By similarity).</text>
</comment>
<comment type="alternative products">
    <event type="alternative splicing"/>
    <isoform>
        <id>Q9EST3-1</id>
        <name>1</name>
        <name evidence="6">Clast4-L</name>
        <sequence type="displayed"/>
    </isoform>
    <isoform>
        <id>Q9EST3-2</id>
        <name>2</name>
        <name evidence="6">Clast4-S</name>
        <sequence type="described" ref="VSP_003785"/>
    </isoform>
</comment>
<comment type="tissue specificity">
    <text evidence="3">Highly expressed in developing oocytes.</text>
</comment>
<comment type="domain">
    <text evidence="1">Intrinsically disordered protein with multiple low-complexity regions that confer binding to multiple RNA translation, deadenylation and decapping factors.</text>
</comment>
<comment type="domain">
    <text evidence="1">The YXXXXLphi motif mediates interaction with eIF4E (EIF4E and EIF4E2).</text>
</comment>
<comment type="PTM">
    <text evidence="1 3">Phosphorylation by MAPK8/JNK1 and or MAPK9/JNK2 in response to oxidative stress promotes P-body assembly (By similarity). Phosphorylated during meiotic maturation (PubMed:16343815).</text>
</comment>
<comment type="similarity">
    <text evidence="9">Belongs to the 4E-T/EIF4E-T family.</text>
</comment>
<sequence length="983" mass="107986">MEKSVAETENGDAFLELKKLPTSKSPHRYTKEELLDIKERPYSKQRPSCLSEKYDSDGVWDPEKWHASLYPASGRSSPVESLKKESESDRPSLVRRIADPRERVKEDDLDVVLSPQRRSFGGGCHVTAAVSSRRSGSPLEKDSDGLRLLGGRRIGSGRIISARAFEKDHRLSDKDLRDLRDRDRERDYKDKRFRREFGDSKRVFGERRRNDSYTEEEPEWFSAGPTSQSETIELTGFDDKILEEDHKGRKRTRRRTASVKEGIVECNGGVAEEDEVEVILAQEPSADQEVPRDVILPEQSPGEFDFNEFFNLDKVPCLASMIEDVLGEGSVSASRFSRWFSNPSRSGSRSSSLGSTPHEELERLAGLEQAVLSPGQNSGNYFAPIPSEDHAENKVDILEMLQKAKVDLKPLLSSLSANKEKLKESSHSGVVLSVEEVEAGLKGLKVDQQMKNSTPFMAEHLEETLSAASSNRQLKKDGDMTAFNKLVNTMKASGTLPTQPKVSRNVESHLLAPAEIPGQPVSKNILQELLGQPVQRPASSNLLSGLMGSLEATASLLSQRAPSPPMSQVFRTQAASADYLHPRIPSPIGFPSGPQQLLGDPFQGMRKPMSPVSAQMSQLELQQAALEGLALPHDLAVQTAPFYQPGFSKPQVDRTRDGLRNRQQRMSKSPAPMHGGNSSSPAPAASITSMLSPSFTPTSVIRKMYESREKTKEEMAPGMVVPGDGKEDTQKTSEENLLSSNPIPNTDQDSSTTNPKLSTLQRSSCSTPLSQTSRYTKEQDYRPKTAGRKTPTLASPVPGTPFLRPTHQVPLVPHVPIVRPAHQLHPGLVQRLIAQGVHPQHLPSLLQAGVLPPGIDMAPLQGLSGPLLGQPLYPLVSAASHPLLNPRPGTPLHLAVMQQQLQRSVLHPPGSSSQAAAISVQTPQNVPSRSGMPHMHSQLEHRTSQRSSSPVGLAKWFGSDVLQQPLPSMPTKVISVDELEYRQ</sequence>
<name>4ET_MOUSE</name>
<proteinExistence type="evidence at protein level"/>
<reference key="1">
    <citation type="submission" date="1999-08" db="EMBL/GenBank/DDBJ databases">
        <title>Cloning and characterization of a novel CD40-activated gene.</title>
        <authorList>
            <person name="O-Wang J."/>
        </authorList>
    </citation>
    <scope>NUCLEOTIDE SEQUENCE [MRNA] (ISOFORM 1)</scope>
</reference>
<reference key="2">
    <citation type="journal article" date="2009" name="PLoS Biol.">
        <title>Lineage-specific biology revealed by a finished genome assembly of the mouse.</title>
        <authorList>
            <person name="Church D.M."/>
            <person name="Goodstadt L."/>
            <person name="Hillier L.W."/>
            <person name="Zody M.C."/>
            <person name="Goldstein S."/>
            <person name="She X."/>
            <person name="Bult C.J."/>
            <person name="Agarwala R."/>
            <person name="Cherry J.L."/>
            <person name="DiCuccio M."/>
            <person name="Hlavina W."/>
            <person name="Kapustin Y."/>
            <person name="Meric P."/>
            <person name="Maglott D."/>
            <person name="Birtle Z."/>
            <person name="Marques A.C."/>
            <person name="Graves T."/>
            <person name="Zhou S."/>
            <person name="Teague B."/>
            <person name="Potamousis K."/>
            <person name="Churas C."/>
            <person name="Place M."/>
            <person name="Herschleb J."/>
            <person name="Runnheim R."/>
            <person name="Forrest D."/>
            <person name="Amos-Landgraf J."/>
            <person name="Schwartz D.C."/>
            <person name="Cheng Z."/>
            <person name="Lindblad-Toh K."/>
            <person name="Eichler E.E."/>
            <person name="Ponting C.P."/>
        </authorList>
    </citation>
    <scope>NUCLEOTIDE SEQUENCE [LARGE SCALE GENOMIC DNA]</scope>
    <source>
        <strain>C57BL/6J</strain>
    </source>
</reference>
<reference key="3">
    <citation type="submission" date="2005-07" db="EMBL/GenBank/DDBJ databases">
        <authorList>
            <person name="Mural R.J."/>
            <person name="Adams M.D."/>
            <person name="Myers E.W."/>
            <person name="Smith H.O."/>
            <person name="Venter J.C."/>
        </authorList>
    </citation>
    <scope>NUCLEOTIDE SEQUENCE [LARGE SCALE GENOMIC DNA]</scope>
</reference>
<reference key="4">
    <citation type="journal article" date="2004" name="Genome Res.">
        <title>The status, quality, and expansion of the NIH full-length cDNA project: the Mammalian Gene Collection (MGC).</title>
        <authorList>
            <consortium name="The MGC Project Team"/>
        </authorList>
    </citation>
    <scope>NUCLEOTIDE SEQUENCE [LARGE SCALE MRNA] (ISOFORM 1)</scope>
    <source>
        <tissue>Eye</tissue>
    </source>
</reference>
<reference key="5">
    <citation type="journal article" date="2005" name="Science">
        <title>The transcriptional landscape of the mammalian genome.</title>
        <authorList>
            <person name="Carninci P."/>
            <person name="Kasukawa T."/>
            <person name="Katayama S."/>
            <person name="Gough J."/>
            <person name="Frith M.C."/>
            <person name="Maeda N."/>
            <person name="Oyama R."/>
            <person name="Ravasi T."/>
            <person name="Lenhard B."/>
            <person name="Wells C."/>
            <person name="Kodzius R."/>
            <person name="Shimokawa K."/>
            <person name="Bajic V.B."/>
            <person name="Brenner S.E."/>
            <person name="Batalov S."/>
            <person name="Forrest A.R."/>
            <person name="Zavolan M."/>
            <person name="Davis M.J."/>
            <person name="Wilming L.G."/>
            <person name="Aidinis V."/>
            <person name="Allen J.E."/>
            <person name="Ambesi-Impiombato A."/>
            <person name="Apweiler R."/>
            <person name="Aturaliya R.N."/>
            <person name="Bailey T.L."/>
            <person name="Bansal M."/>
            <person name="Baxter L."/>
            <person name="Beisel K.W."/>
            <person name="Bersano T."/>
            <person name="Bono H."/>
            <person name="Chalk A.M."/>
            <person name="Chiu K.P."/>
            <person name="Choudhary V."/>
            <person name="Christoffels A."/>
            <person name="Clutterbuck D.R."/>
            <person name="Crowe M.L."/>
            <person name="Dalla E."/>
            <person name="Dalrymple B.P."/>
            <person name="de Bono B."/>
            <person name="Della Gatta G."/>
            <person name="di Bernardo D."/>
            <person name="Down T."/>
            <person name="Engstrom P."/>
            <person name="Fagiolini M."/>
            <person name="Faulkner G."/>
            <person name="Fletcher C.F."/>
            <person name="Fukushima T."/>
            <person name="Furuno M."/>
            <person name="Futaki S."/>
            <person name="Gariboldi M."/>
            <person name="Georgii-Hemming P."/>
            <person name="Gingeras T.R."/>
            <person name="Gojobori T."/>
            <person name="Green R.E."/>
            <person name="Gustincich S."/>
            <person name="Harbers M."/>
            <person name="Hayashi Y."/>
            <person name="Hensch T.K."/>
            <person name="Hirokawa N."/>
            <person name="Hill D."/>
            <person name="Huminiecki L."/>
            <person name="Iacono M."/>
            <person name="Ikeo K."/>
            <person name="Iwama A."/>
            <person name="Ishikawa T."/>
            <person name="Jakt M."/>
            <person name="Kanapin A."/>
            <person name="Katoh M."/>
            <person name="Kawasawa Y."/>
            <person name="Kelso J."/>
            <person name="Kitamura H."/>
            <person name="Kitano H."/>
            <person name="Kollias G."/>
            <person name="Krishnan S.P."/>
            <person name="Kruger A."/>
            <person name="Kummerfeld S.K."/>
            <person name="Kurochkin I.V."/>
            <person name="Lareau L.F."/>
            <person name="Lazarevic D."/>
            <person name="Lipovich L."/>
            <person name="Liu J."/>
            <person name="Liuni S."/>
            <person name="McWilliam S."/>
            <person name="Madan Babu M."/>
            <person name="Madera M."/>
            <person name="Marchionni L."/>
            <person name="Matsuda H."/>
            <person name="Matsuzawa S."/>
            <person name="Miki H."/>
            <person name="Mignone F."/>
            <person name="Miyake S."/>
            <person name="Morris K."/>
            <person name="Mottagui-Tabar S."/>
            <person name="Mulder N."/>
            <person name="Nakano N."/>
            <person name="Nakauchi H."/>
            <person name="Ng P."/>
            <person name="Nilsson R."/>
            <person name="Nishiguchi S."/>
            <person name="Nishikawa S."/>
            <person name="Nori F."/>
            <person name="Ohara O."/>
            <person name="Okazaki Y."/>
            <person name="Orlando V."/>
            <person name="Pang K.C."/>
            <person name="Pavan W.J."/>
            <person name="Pavesi G."/>
            <person name="Pesole G."/>
            <person name="Petrovsky N."/>
            <person name="Piazza S."/>
            <person name="Reed J."/>
            <person name="Reid J.F."/>
            <person name="Ring B.Z."/>
            <person name="Ringwald M."/>
            <person name="Rost B."/>
            <person name="Ruan Y."/>
            <person name="Salzberg S.L."/>
            <person name="Sandelin A."/>
            <person name="Schneider C."/>
            <person name="Schoenbach C."/>
            <person name="Sekiguchi K."/>
            <person name="Semple C.A."/>
            <person name="Seno S."/>
            <person name="Sessa L."/>
            <person name="Sheng Y."/>
            <person name="Shibata Y."/>
            <person name="Shimada H."/>
            <person name="Shimada K."/>
            <person name="Silva D."/>
            <person name="Sinclair B."/>
            <person name="Sperling S."/>
            <person name="Stupka E."/>
            <person name="Sugiura K."/>
            <person name="Sultana R."/>
            <person name="Takenaka Y."/>
            <person name="Taki K."/>
            <person name="Tammoja K."/>
            <person name="Tan S.L."/>
            <person name="Tang S."/>
            <person name="Taylor M.S."/>
            <person name="Tegner J."/>
            <person name="Teichmann S.A."/>
            <person name="Ueda H.R."/>
            <person name="van Nimwegen E."/>
            <person name="Verardo R."/>
            <person name="Wei C.L."/>
            <person name="Yagi K."/>
            <person name="Yamanishi H."/>
            <person name="Zabarovsky E."/>
            <person name="Zhu S."/>
            <person name="Zimmer A."/>
            <person name="Hide W."/>
            <person name="Bult C."/>
            <person name="Grimmond S.M."/>
            <person name="Teasdale R.D."/>
            <person name="Liu E.T."/>
            <person name="Brusic V."/>
            <person name="Quackenbush J."/>
            <person name="Wahlestedt C."/>
            <person name="Mattick J.S."/>
            <person name="Hume D.A."/>
            <person name="Kai C."/>
            <person name="Sasaki D."/>
            <person name="Tomaru Y."/>
            <person name="Fukuda S."/>
            <person name="Kanamori-Katayama M."/>
            <person name="Suzuki M."/>
            <person name="Aoki J."/>
            <person name="Arakawa T."/>
            <person name="Iida J."/>
            <person name="Imamura K."/>
            <person name="Itoh M."/>
            <person name="Kato T."/>
            <person name="Kawaji H."/>
            <person name="Kawagashira N."/>
            <person name="Kawashima T."/>
            <person name="Kojima M."/>
            <person name="Kondo S."/>
            <person name="Konno H."/>
            <person name="Nakano K."/>
            <person name="Ninomiya N."/>
            <person name="Nishio T."/>
            <person name="Okada M."/>
            <person name="Plessy C."/>
            <person name="Shibata K."/>
            <person name="Shiraki T."/>
            <person name="Suzuki S."/>
            <person name="Tagami M."/>
            <person name="Waki K."/>
            <person name="Watahiki A."/>
            <person name="Okamura-Oho Y."/>
            <person name="Suzuki H."/>
            <person name="Kawai J."/>
            <person name="Hayashizaki Y."/>
        </authorList>
    </citation>
    <scope>NUCLEOTIDE SEQUENCE [LARGE SCALE MRNA] OF 428-983 (ISOFORM 2)</scope>
    <source>
        <strain>C57BL/6J</strain>
        <tissue>Embryo</tissue>
    </source>
</reference>
<reference key="6">
    <citation type="journal article" date="2004" name="Mol. Cell. Proteomics">
        <title>Phosphoproteomic analysis of the developing mouse brain.</title>
        <authorList>
            <person name="Ballif B.A."/>
            <person name="Villen J."/>
            <person name="Beausoleil S.A."/>
            <person name="Schwartz D."/>
            <person name="Gygi S.P."/>
        </authorList>
    </citation>
    <scope>PHOSPHORYLATION [LARGE SCALE ANALYSIS] AT SER-586</scope>
    <scope>IDENTIFICATION BY MASS SPECTROMETRY [LARGE SCALE ANALYSIS]</scope>
    <source>
        <tissue>Embryonic brain</tissue>
    </source>
</reference>
<reference key="7">
    <citation type="journal article" date="2009" name="Immunity">
        <title>The phagosomal proteome in interferon-gamma-activated macrophages.</title>
        <authorList>
            <person name="Trost M."/>
            <person name="English L."/>
            <person name="Lemieux S."/>
            <person name="Courcelles M."/>
            <person name="Desjardins M."/>
            <person name="Thibault P."/>
        </authorList>
    </citation>
    <scope>PHOSPHORYLATION [LARGE SCALE ANALYSIS] AT SER-949</scope>
    <scope>IDENTIFICATION BY MASS SPECTROMETRY [LARGE SCALE ANALYSIS]</scope>
</reference>
<reference key="8">
    <citation type="journal article" date="2010" name="Cell">
        <title>A tissue-specific atlas of mouse protein phosphorylation and expression.</title>
        <authorList>
            <person name="Huttlin E.L."/>
            <person name="Jedrychowski M.P."/>
            <person name="Elias J.E."/>
            <person name="Goswami T."/>
            <person name="Rad R."/>
            <person name="Beausoleil S.A."/>
            <person name="Villen J."/>
            <person name="Haas W."/>
            <person name="Sowa M.E."/>
            <person name="Gygi S.P."/>
        </authorList>
    </citation>
    <scope>PHOSPHORYLATION [LARGE SCALE ANALYSIS] AT SER-563 AND SER-586</scope>
    <scope>IDENTIFICATION BY MASS SPECTROMETRY [LARGE SCALE ANALYSIS]</scope>
    <source>
        <tissue>Brain</tissue>
        <tissue>Kidney</tissue>
        <tissue>Lung</tissue>
        <tissue>Spleen</tissue>
        <tissue>Testis</tissue>
    </source>
</reference>
<reference key="9">
    <citation type="journal article" date="2006" name="Gene">
        <title>Clast4, the murine homologue of human eIF4E-transporter, is highly expressed in developing oocytes and post-translationally modified at meiotic maturation.</title>
        <authorList>
            <person name="Villaescusa J.C."/>
            <person name="Allard P."/>
            <person name="Carminati E."/>
            <person name="Kontogiannea M."/>
            <person name="Talarico D."/>
            <person name="Blasi F."/>
            <person name="Farookhi R."/>
            <person name="Verrotti A.C."/>
        </authorList>
    </citation>
    <scope>SUBCELLULAR LOCATION</scope>
    <scope>INTERACTION WITH EIF4E</scope>
    <scope>TISSUE SPECIFICITY</scope>
    <scope>ALTERNATIVE SPLICING</scope>
    <scope>MUTAGENESIS OF 29-TYR--LEU-34</scope>
</reference>
<reference key="10">
    <citation type="journal article" date="2014" name="Neuron">
        <title>An eIF4E1/4E-T complex determines the genesis of neurons from precursors by translationally repressing a proneurogenic transcription program.</title>
        <authorList>
            <person name="Yang G."/>
            <person name="Smibert C.A."/>
            <person name="Kaplan D.R."/>
            <person name="Miller F.D."/>
        </authorList>
    </citation>
    <scope>FUNCTION</scope>
</reference>
<keyword id="KW-0007">Acetylation</keyword>
<keyword id="KW-0025">Alternative splicing</keyword>
<keyword id="KW-0963">Cytoplasm</keyword>
<keyword id="KW-1017">Isopeptide bond</keyword>
<keyword id="KW-0539">Nucleus</keyword>
<keyword id="KW-0597">Phosphoprotein</keyword>
<keyword id="KW-0653">Protein transport</keyword>
<keyword id="KW-1185">Reference proteome</keyword>
<keyword id="KW-0943">RNA-mediated gene silencing</keyword>
<keyword id="KW-0810">Translation regulation</keyword>
<keyword id="KW-0813">Transport</keyword>
<keyword id="KW-0832">Ubl conjugation</keyword>
<gene>
    <name evidence="10" type="primary">Eif4enif1</name>
    <name evidence="6 8" type="synonym">Clast4</name>
</gene>
<protein>
    <recommendedName>
        <fullName evidence="7">Eukaryotic translation initiation factor 4E transporter</fullName>
        <shortName evidence="7">4E-T</shortName>
        <shortName evidence="7">eIF4E transporter</shortName>
    </recommendedName>
    <alternativeName>
        <fullName evidence="8">CD40 ligand-activated specific transcript 4</fullName>
    </alternativeName>
    <alternativeName>
        <fullName>Eukaryotic translation initiation factor 4E nuclear import factor 1</fullName>
    </alternativeName>
</protein>
<organism>
    <name type="scientific">Mus musculus</name>
    <name type="common">Mouse</name>
    <dbReference type="NCBI Taxonomy" id="10090"/>
    <lineage>
        <taxon>Eukaryota</taxon>
        <taxon>Metazoa</taxon>
        <taxon>Chordata</taxon>
        <taxon>Craniata</taxon>
        <taxon>Vertebrata</taxon>
        <taxon>Euteleostomi</taxon>
        <taxon>Mammalia</taxon>
        <taxon>Eutheria</taxon>
        <taxon>Euarchontoglires</taxon>
        <taxon>Glires</taxon>
        <taxon>Rodentia</taxon>
        <taxon>Myomorpha</taxon>
        <taxon>Muroidea</taxon>
        <taxon>Muridae</taxon>
        <taxon>Murinae</taxon>
        <taxon>Mus</taxon>
        <taxon>Mus</taxon>
    </lineage>
</organism>
<evidence type="ECO:0000250" key="1">
    <source>
        <dbReference type="UniProtKB" id="Q9NRA8"/>
    </source>
</evidence>
<evidence type="ECO:0000256" key="2">
    <source>
        <dbReference type="SAM" id="MobiDB-lite"/>
    </source>
</evidence>
<evidence type="ECO:0000269" key="3">
    <source>
    </source>
</evidence>
<evidence type="ECO:0000269" key="4">
    <source>
    </source>
</evidence>
<evidence type="ECO:0000303" key="5">
    <source>
    </source>
</evidence>
<evidence type="ECO:0000303" key="6">
    <source>
    </source>
</evidence>
<evidence type="ECO:0000303" key="7">
    <source>
    </source>
</evidence>
<evidence type="ECO:0000303" key="8">
    <source ref="1"/>
</evidence>
<evidence type="ECO:0000305" key="9"/>
<evidence type="ECO:0000312" key="10">
    <source>
        <dbReference type="MGI" id="MGI:1921453"/>
    </source>
</evidence>
<evidence type="ECO:0007744" key="11">
    <source>
    </source>
</evidence>
<evidence type="ECO:0007744" key="12">
    <source>
    </source>
</evidence>